<name>ISPE_LISMH</name>
<feature type="chain" id="PRO_1000190690" description="4-diphosphocytidyl-2-C-methyl-D-erythritol kinase">
    <location>
        <begin position="1"/>
        <end position="291"/>
    </location>
</feature>
<feature type="active site" evidence="1">
    <location>
        <position position="10"/>
    </location>
</feature>
<feature type="active site" evidence="1">
    <location>
        <position position="136"/>
    </location>
</feature>
<feature type="binding site" evidence="1">
    <location>
        <begin position="94"/>
        <end position="104"/>
    </location>
    <ligand>
        <name>ATP</name>
        <dbReference type="ChEBI" id="CHEBI:30616"/>
    </ligand>
</feature>
<evidence type="ECO:0000255" key="1">
    <source>
        <dbReference type="HAMAP-Rule" id="MF_00061"/>
    </source>
</evidence>
<proteinExistence type="inferred from homology"/>
<protein>
    <recommendedName>
        <fullName evidence="1">4-diphosphocytidyl-2-C-methyl-D-erythritol kinase</fullName>
        <shortName evidence="1">CMK</shortName>
        <ecNumber evidence="1">2.7.1.148</ecNumber>
    </recommendedName>
    <alternativeName>
        <fullName evidence="1">4-(cytidine-5'-diphospho)-2-C-methyl-D-erythritol kinase</fullName>
    </alternativeName>
</protein>
<keyword id="KW-0067">ATP-binding</keyword>
<keyword id="KW-0414">Isoprene biosynthesis</keyword>
<keyword id="KW-0418">Kinase</keyword>
<keyword id="KW-0547">Nucleotide-binding</keyword>
<keyword id="KW-0808">Transferase</keyword>
<organism>
    <name type="scientific">Listeria monocytogenes serotype 4a (strain HCC23)</name>
    <dbReference type="NCBI Taxonomy" id="552536"/>
    <lineage>
        <taxon>Bacteria</taxon>
        <taxon>Bacillati</taxon>
        <taxon>Bacillota</taxon>
        <taxon>Bacilli</taxon>
        <taxon>Bacillales</taxon>
        <taxon>Listeriaceae</taxon>
        <taxon>Listeria</taxon>
    </lineage>
</organism>
<comment type="function">
    <text evidence="1">Catalyzes the phosphorylation of the position 2 hydroxy group of 4-diphosphocytidyl-2C-methyl-D-erythritol.</text>
</comment>
<comment type="catalytic activity">
    <reaction evidence="1">
        <text>4-CDP-2-C-methyl-D-erythritol + ATP = 4-CDP-2-C-methyl-D-erythritol 2-phosphate + ADP + H(+)</text>
        <dbReference type="Rhea" id="RHEA:18437"/>
        <dbReference type="ChEBI" id="CHEBI:15378"/>
        <dbReference type="ChEBI" id="CHEBI:30616"/>
        <dbReference type="ChEBI" id="CHEBI:57823"/>
        <dbReference type="ChEBI" id="CHEBI:57919"/>
        <dbReference type="ChEBI" id="CHEBI:456216"/>
        <dbReference type="EC" id="2.7.1.148"/>
    </reaction>
</comment>
<comment type="pathway">
    <text evidence="1">Isoprenoid biosynthesis; isopentenyl diphosphate biosynthesis via DXP pathway; isopentenyl diphosphate from 1-deoxy-D-xylulose 5-phosphate: step 3/6.</text>
</comment>
<comment type="similarity">
    <text evidence="1">Belongs to the GHMP kinase family. IspE subfamily.</text>
</comment>
<reference key="1">
    <citation type="journal article" date="2011" name="J. Bacteriol.">
        <title>Genome sequence of lineage III Listeria monocytogenes strain HCC23.</title>
        <authorList>
            <person name="Steele C.L."/>
            <person name="Donaldson J.R."/>
            <person name="Paul D."/>
            <person name="Banes M.M."/>
            <person name="Arick T."/>
            <person name="Bridges S.M."/>
            <person name="Lawrence M.L."/>
        </authorList>
    </citation>
    <scope>NUCLEOTIDE SEQUENCE [LARGE SCALE GENOMIC DNA]</scope>
    <source>
        <strain>HCC23</strain>
    </source>
</reference>
<accession>B8DGN5</accession>
<dbReference type="EC" id="2.7.1.148" evidence="1"/>
<dbReference type="EMBL" id="CP001175">
    <property type="protein sequence ID" value="ACK40788.1"/>
    <property type="molecule type" value="Genomic_DNA"/>
</dbReference>
<dbReference type="RefSeq" id="WP_003728890.1">
    <property type="nucleotide sequence ID" value="NC_011660.1"/>
</dbReference>
<dbReference type="SMR" id="B8DGN5"/>
<dbReference type="KEGG" id="lmh:LMHCC_2453"/>
<dbReference type="HOGENOM" id="CLU_053057_1_1_9"/>
<dbReference type="UniPathway" id="UPA00056">
    <property type="reaction ID" value="UER00094"/>
</dbReference>
<dbReference type="GO" id="GO:0050515">
    <property type="term" value="F:4-(cytidine 5'-diphospho)-2-C-methyl-D-erythritol kinase activity"/>
    <property type="evidence" value="ECO:0007669"/>
    <property type="project" value="UniProtKB-UniRule"/>
</dbReference>
<dbReference type="GO" id="GO:0005524">
    <property type="term" value="F:ATP binding"/>
    <property type="evidence" value="ECO:0007669"/>
    <property type="project" value="UniProtKB-UniRule"/>
</dbReference>
<dbReference type="GO" id="GO:0019288">
    <property type="term" value="P:isopentenyl diphosphate biosynthetic process, methylerythritol 4-phosphate pathway"/>
    <property type="evidence" value="ECO:0007669"/>
    <property type="project" value="UniProtKB-UniRule"/>
</dbReference>
<dbReference type="GO" id="GO:0016114">
    <property type="term" value="P:terpenoid biosynthetic process"/>
    <property type="evidence" value="ECO:0007669"/>
    <property type="project" value="InterPro"/>
</dbReference>
<dbReference type="FunFam" id="3.30.230.10:FF:000029">
    <property type="entry name" value="4-diphosphocytidyl-2-C-methyl-D-erythritol kinase"/>
    <property type="match status" value="1"/>
</dbReference>
<dbReference type="FunFam" id="3.30.70.890:FF:000006">
    <property type="entry name" value="4-diphosphocytidyl-2-C-methyl-D-erythritol kinase"/>
    <property type="match status" value="1"/>
</dbReference>
<dbReference type="Gene3D" id="3.30.230.10">
    <property type="match status" value="1"/>
</dbReference>
<dbReference type="Gene3D" id="3.30.70.890">
    <property type="entry name" value="GHMP kinase, C-terminal domain"/>
    <property type="match status" value="1"/>
</dbReference>
<dbReference type="HAMAP" id="MF_00061">
    <property type="entry name" value="IspE"/>
    <property type="match status" value="1"/>
</dbReference>
<dbReference type="InterPro" id="IPR013750">
    <property type="entry name" value="GHMP_kinase_C_dom"/>
</dbReference>
<dbReference type="InterPro" id="IPR036554">
    <property type="entry name" value="GHMP_kinase_C_sf"/>
</dbReference>
<dbReference type="InterPro" id="IPR006204">
    <property type="entry name" value="GHMP_kinase_N_dom"/>
</dbReference>
<dbReference type="InterPro" id="IPR004424">
    <property type="entry name" value="IspE"/>
</dbReference>
<dbReference type="InterPro" id="IPR020568">
    <property type="entry name" value="Ribosomal_Su5_D2-typ_SF"/>
</dbReference>
<dbReference type="InterPro" id="IPR014721">
    <property type="entry name" value="Ribsml_uS5_D2-typ_fold_subgr"/>
</dbReference>
<dbReference type="NCBIfam" id="TIGR00154">
    <property type="entry name" value="ispE"/>
    <property type="match status" value="1"/>
</dbReference>
<dbReference type="NCBIfam" id="NF011202">
    <property type="entry name" value="PRK14608.1"/>
    <property type="match status" value="1"/>
</dbReference>
<dbReference type="PANTHER" id="PTHR43527">
    <property type="entry name" value="4-DIPHOSPHOCYTIDYL-2-C-METHYL-D-ERYTHRITOL KINASE, CHLOROPLASTIC"/>
    <property type="match status" value="1"/>
</dbReference>
<dbReference type="PANTHER" id="PTHR43527:SF2">
    <property type="entry name" value="4-DIPHOSPHOCYTIDYL-2-C-METHYL-D-ERYTHRITOL KINASE, CHLOROPLASTIC"/>
    <property type="match status" value="1"/>
</dbReference>
<dbReference type="Pfam" id="PF08544">
    <property type="entry name" value="GHMP_kinases_C"/>
    <property type="match status" value="1"/>
</dbReference>
<dbReference type="Pfam" id="PF00288">
    <property type="entry name" value="GHMP_kinases_N"/>
    <property type="match status" value="1"/>
</dbReference>
<dbReference type="PIRSF" id="PIRSF010376">
    <property type="entry name" value="IspE"/>
    <property type="match status" value="1"/>
</dbReference>
<dbReference type="SUPFAM" id="SSF55060">
    <property type="entry name" value="GHMP Kinase, C-terminal domain"/>
    <property type="match status" value="1"/>
</dbReference>
<dbReference type="SUPFAM" id="SSF54211">
    <property type="entry name" value="Ribosomal protein S5 domain 2-like"/>
    <property type="match status" value="1"/>
</dbReference>
<gene>
    <name evidence="1" type="primary">ispE</name>
    <name type="ordered locus">LMHCC_2453</name>
</gene>
<sequence length="291" mass="31995">MKISITAPAKINLSLDALYKRDDGYHEVEMVMTTIDLADRLYLERLDEDKIVLDVKAHFIPEDRRNLIYQAALLLKKRFDVKMGVRITIDKHIPVSAGLAGGSSDAAAALKGLNIIWELGLSIEELAEISSEIGSDIAFCVYGGTALATGRGEKISALPNMPGCWIVLAKPSISVSTPTIYKELQVESVEHPDTKKMIESIKNGDLDGIFASTGNVLESVTLEKNPQVKRIKDRMLAFGAEAALMSGSGPTVFALIKQYSRAKRVYNGLRGFCEEVYMVRPWSEGENDTNK</sequence>